<proteinExistence type="inferred from homology"/>
<reference key="1">
    <citation type="journal article" date="2012" name="BMC Genomics">
        <title>Comparative genomics and transcriptomics of lineages I, II, and III strains of Listeria monocytogenes.</title>
        <authorList>
            <person name="Hain T."/>
            <person name="Ghai R."/>
            <person name="Billion A."/>
            <person name="Kuenne C.T."/>
            <person name="Steinweg C."/>
            <person name="Izar B."/>
            <person name="Mohamed W."/>
            <person name="Mraheil M."/>
            <person name="Domann E."/>
            <person name="Schaffrath S."/>
            <person name="Karst U."/>
            <person name="Goesmann A."/>
            <person name="Oehm S."/>
            <person name="Puhler A."/>
            <person name="Merkl R."/>
            <person name="Vorwerk S."/>
            <person name="Glaser P."/>
            <person name="Garrido P."/>
            <person name="Rusniok C."/>
            <person name="Buchrieser C."/>
            <person name="Goebel W."/>
            <person name="Chakraborty T."/>
        </authorList>
    </citation>
    <scope>NUCLEOTIDE SEQUENCE [LARGE SCALE GENOMIC DNA]</scope>
    <source>
        <strain>CLIP80459</strain>
    </source>
</reference>
<organism>
    <name type="scientific">Listeria monocytogenes serotype 4b (strain CLIP80459)</name>
    <dbReference type="NCBI Taxonomy" id="568819"/>
    <lineage>
        <taxon>Bacteria</taxon>
        <taxon>Bacillati</taxon>
        <taxon>Bacillota</taxon>
        <taxon>Bacilli</taxon>
        <taxon>Bacillales</taxon>
        <taxon>Listeriaceae</taxon>
        <taxon>Listeria</taxon>
    </lineage>
</organism>
<evidence type="ECO:0000255" key="1">
    <source>
        <dbReference type="HAMAP-Rule" id="MF_01326"/>
    </source>
</evidence>
<evidence type="ECO:0000305" key="2"/>
<gene>
    <name evidence="1" type="primary">rplX</name>
    <name type="ordered locus">Lm4b_02588</name>
</gene>
<sequence length="103" mass="11193">MHVKKGDKVKVITGKDKGKSGKVLAAFPKKDRVLIEGINMVKKHTKPSNINPQGGILNVEAPIHVSNVMLIDPKTGEPTRVGYEVKGDKKVRVAKKSGEVIDK</sequence>
<comment type="function">
    <text evidence="1">One of two assembly initiator proteins, it binds directly to the 5'-end of the 23S rRNA, where it nucleates assembly of the 50S subunit.</text>
</comment>
<comment type="function">
    <text evidence="1">One of the proteins that surrounds the polypeptide exit tunnel on the outside of the subunit.</text>
</comment>
<comment type="subunit">
    <text evidence="1">Part of the 50S ribosomal subunit.</text>
</comment>
<comment type="similarity">
    <text evidence="1">Belongs to the universal ribosomal protein uL24 family.</text>
</comment>
<feature type="chain" id="PRO_1000214550" description="Large ribosomal subunit protein uL24">
    <location>
        <begin position="1"/>
        <end position="103"/>
    </location>
</feature>
<protein>
    <recommendedName>
        <fullName evidence="1">Large ribosomal subunit protein uL24</fullName>
    </recommendedName>
    <alternativeName>
        <fullName evidence="2">50S ribosomal protein L24</fullName>
    </alternativeName>
</protein>
<name>RL24_LISMC</name>
<keyword id="KW-0687">Ribonucleoprotein</keyword>
<keyword id="KW-0689">Ribosomal protein</keyword>
<keyword id="KW-0694">RNA-binding</keyword>
<keyword id="KW-0699">rRNA-binding</keyword>
<dbReference type="EMBL" id="FM242711">
    <property type="protein sequence ID" value="CAS06342.1"/>
    <property type="molecule type" value="Genomic_DNA"/>
</dbReference>
<dbReference type="RefSeq" id="WP_003720939.1">
    <property type="nucleotide sequence ID" value="NC_012488.1"/>
</dbReference>
<dbReference type="SMR" id="C1KZG9"/>
<dbReference type="GeneID" id="93236043"/>
<dbReference type="KEGG" id="lmc:Lm4b_02588"/>
<dbReference type="HOGENOM" id="CLU_093315_2_0_9"/>
<dbReference type="GO" id="GO:1990904">
    <property type="term" value="C:ribonucleoprotein complex"/>
    <property type="evidence" value="ECO:0007669"/>
    <property type="project" value="UniProtKB-KW"/>
</dbReference>
<dbReference type="GO" id="GO:0005840">
    <property type="term" value="C:ribosome"/>
    <property type="evidence" value="ECO:0007669"/>
    <property type="project" value="UniProtKB-KW"/>
</dbReference>
<dbReference type="GO" id="GO:0019843">
    <property type="term" value="F:rRNA binding"/>
    <property type="evidence" value="ECO:0007669"/>
    <property type="project" value="UniProtKB-UniRule"/>
</dbReference>
<dbReference type="GO" id="GO:0003735">
    <property type="term" value="F:structural constituent of ribosome"/>
    <property type="evidence" value="ECO:0007669"/>
    <property type="project" value="InterPro"/>
</dbReference>
<dbReference type="GO" id="GO:0006412">
    <property type="term" value="P:translation"/>
    <property type="evidence" value="ECO:0007669"/>
    <property type="project" value="UniProtKB-UniRule"/>
</dbReference>
<dbReference type="CDD" id="cd06089">
    <property type="entry name" value="KOW_RPL26"/>
    <property type="match status" value="1"/>
</dbReference>
<dbReference type="FunFam" id="2.30.30.30:FF:000004">
    <property type="entry name" value="50S ribosomal protein L24"/>
    <property type="match status" value="1"/>
</dbReference>
<dbReference type="Gene3D" id="2.30.30.30">
    <property type="match status" value="1"/>
</dbReference>
<dbReference type="HAMAP" id="MF_01326_B">
    <property type="entry name" value="Ribosomal_uL24_B"/>
    <property type="match status" value="1"/>
</dbReference>
<dbReference type="InterPro" id="IPR005824">
    <property type="entry name" value="KOW"/>
</dbReference>
<dbReference type="InterPro" id="IPR014722">
    <property type="entry name" value="Rib_uL2_dom2"/>
</dbReference>
<dbReference type="InterPro" id="IPR003256">
    <property type="entry name" value="Ribosomal_uL24"/>
</dbReference>
<dbReference type="InterPro" id="IPR005825">
    <property type="entry name" value="Ribosomal_uL24_CS"/>
</dbReference>
<dbReference type="InterPro" id="IPR041988">
    <property type="entry name" value="Ribosomal_uL24_KOW"/>
</dbReference>
<dbReference type="InterPro" id="IPR008991">
    <property type="entry name" value="Translation_prot_SH3-like_sf"/>
</dbReference>
<dbReference type="NCBIfam" id="TIGR01079">
    <property type="entry name" value="rplX_bact"/>
    <property type="match status" value="1"/>
</dbReference>
<dbReference type="PANTHER" id="PTHR12903">
    <property type="entry name" value="MITOCHONDRIAL RIBOSOMAL PROTEIN L24"/>
    <property type="match status" value="1"/>
</dbReference>
<dbReference type="Pfam" id="PF00467">
    <property type="entry name" value="KOW"/>
    <property type="match status" value="1"/>
</dbReference>
<dbReference type="Pfam" id="PF17136">
    <property type="entry name" value="ribosomal_L24"/>
    <property type="match status" value="1"/>
</dbReference>
<dbReference type="SMART" id="SM00739">
    <property type="entry name" value="KOW"/>
    <property type="match status" value="1"/>
</dbReference>
<dbReference type="SUPFAM" id="SSF50104">
    <property type="entry name" value="Translation proteins SH3-like domain"/>
    <property type="match status" value="1"/>
</dbReference>
<dbReference type="PROSITE" id="PS01108">
    <property type="entry name" value="RIBOSOMAL_L24"/>
    <property type="match status" value="1"/>
</dbReference>
<accession>C1KZG9</accession>